<name>RECR_CAUVC</name>
<evidence type="ECO:0000255" key="1">
    <source>
        <dbReference type="HAMAP-Rule" id="MF_00017"/>
    </source>
</evidence>
<evidence type="ECO:0000305" key="2"/>
<dbReference type="EMBL" id="AE005673">
    <property type="protein sequence ID" value="AAK22256.1"/>
    <property type="status" value="ALT_INIT"/>
    <property type="molecule type" value="Genomic_DNA"/>
</dbReference>
<dbReference type="RefSeq" id="NP_419088.1">
    <property type="nucleotide sequence ID" value="NC_002696.2"/>
</dbReference>
<dbReference type="RefSeq" id="WP_012639926.1">
    <property type="nucleotide sequence ID" value="NC_002696.2"/>
</dbReference>
<dbReference type="SMR" id="Q9ABF8"/>
<dbReference type="STRING" id="190650.CC_0269"/>
<dbReference type="EnsemblBacteria" id="AAK22256">
    <property type="protein sequence ID" value="AAK22256"/>
    <property type="gene ID" value="CC_0269"/>
</dbReference>
<dbReference type="KEGG" id="ccr:CC_0269"/>
<dbReference type="PATRIC" id="fig|190650.5.peg.266"/>
<dbReference type="eggNOG" id="COG0353">
    <property type="taxonomic scope" value="Bacteria"/>
</dbReference>
<dbReference type="HOGENOM" id="CLU_060739_1_2_5"/>
<dbReference type="Proteomes" id="UP000001816">
    <property type="component" value="Chromosome"/>
</dbReference>
<dbReference type="GO" id="GO:0003677">
    <property type="term" value="F:DNA binding"/>
    <property type="evidence" value="ECO:0007669"/>
    <property type="project" value="UniProtKB-UniRule"/>
</dbReference>
<dbReference type="GO" id="GO:0008270">
    <property type="term" value="F:zinc ion binding"/>
    <property type="evidence" value="ECO:0007669"/>
    <property type="project" value="UniProtKB-KW"/>
</dbReference>
<dbReference type="GO" id="GO:0006310">
    <property type="term" value="P:DNA recombination"/>
    <property type="evidence" value="ECO:0007669"/>
    <property type="project" value="UniProtKB-UniRule"/>
</dbReference>
<dbReference type="GO" id="GO:0006281">
    <property type="term" value="P:DNA repair"/>
    <property type="evidence" value="ECO:0007669"/>
    <property type="project" value="UniProtKB-UniRule"/>
</dbReference>
<dbReference type="CDD" id="cd01025">
    <property type="entry name" value="TOPRIM_recR"/>
    <property type="match status" value="1"/>
</dbReference>
<dbReference type="Gene3D" id="3.40.1360.10">
    <property type="match status" value="1"/>
</dbReference>
<dbReference type="Gene3D" id="6.10.250.240">
    <property type="match status" value="1"/>
</dbReference>
<dbReference type="Gene3D" id="1.10.8.420">
    <property type="entry name" value="RecR Domain 1"/>
    <property type="match status" value="1"/>
</dbReference>
<dbReference type="HAMAP" id="MF_00017">
    <property type="entry name" value="RecR"/>
    <property type="match status" value="1"/>
</dbReference>
<dbReference type="InterPro" id="IPR000093">
    <property type="entry name" value="DNA_Rcmb_RecR"/>
</dbReference>
<dbReference type="InterPro" id="IPR023627">
    <property type="entry name" value="Rcmb_RecR"/>
</dbReference>
<dbReference type="InterPro" id="IPR015967">
    <property type="entry name" value="Rcmb_RecR_Znf"/>
</dbReference>
<dbReference type="InterPro" id="IPR006171">
    <property type="entry name" value="TOPRIM_dom"/>
</dbReference>
<dbReference type="InterPro" id="IPR034137">
    <property type="entry name" value="TOPRIM_RecR"/>
</dbReference>
<dbReference type="NCBIfam" id="TIGR00615">
    <property type="entry name" value="recR"/>
    <property type="match status" value="1"/>
</dbReference>
<dbReference type="PANTHER" id="PTHR30446">
    <property type="entry name" value="RECOMBINATION PROTEIN RECR"/>
    <property type="match status" value="1"/>
</dbReference>
<dbReference type="PANTHER" id="PTHR30446:SF0">
    <property type="entry name" value="RECOMBINATION PROTEIN RECR"/>
    <property type="match status" value="1"/>
</dbReference>
<dbReference type="Pfam" id="PF21175">
    <property type="entry name" value="RecR_C"/>
    <property type="match status" value="1"/>
</dbReference>
<dbReference type="Pfam" id="PF21176">
    <property type="entry name" value="RecR_HhH"/>
    <property type="match status" value="1"/>
</dbReference>
<dbReference type="Pfam" id="PF02132">
    <property type="entry name" value="RecR_ZnF"/>
    <property type="match status" value="1"/>
</dbReference>
<dbReference type="Pfam" id="PF13662">
    <property type="entry name" value="Toprim_4"/>
    <property type="match status" value="1"/>
</dbReference>
<dbReference type="SMART" id="SM00493">
    <property type="entry name" value="TOPRIM"/>
    <property type="match status" value="1"/>
</dbReference>
<dbReference type="SUPFAM" id="SSF111304">
    <property type="entry name" value="Recombination protein RecR"/>
    <property type="match status" value="1"/>
</dbReference>
<dbReference type="PROSITE" id="PS01300">
    <property type="entry name" value="RECR"/>
    <property type="match status" value="1"/>
</dbReference>
<dbReference type="PROSITE" id="PS50880">
    <property type="entry name" value="TOPRIM"/>
    <property type="match status" value="1"/>
</dbReference>
<gene>
    <name evidence="1" type="primary">recR</name>
    <name type="ordered locus">CC_0269</name>
</gene>
<protein>
    <recommendedName>
        <fullName evidence="1">Recombination protein RecR</fullName>
    </recommendedName>
</protein>
<keyword id="KW-0227">DNA damage</keyword>
<keyword id="KW-0233">DNA recombination</keyword>
<keyword id="KW-0234">DNA repair</keyword>
<keyword id="KW-0479">Metal-binding</keyword>
<keyword id="KW-1185">Reference proteome</keyword>
<keyword id="KW-0862">Zinc</keyword>
<keyword id="KW-0863">Zinc-finger</keyword>
<proteinExistence type="inferred from homology"/>
<reference key="1">
    <citation type="journal article" date="2001" name="Proc. Natl. Acad. Sci. U.S.A.">
        <title>Complete genome sequence of Caulobacter crescentus.</title>
        <authorList>
            <person name="Nierman W.C."/>
            <person name="Feldblyum T.V."/>
            <person name="Laub M.T."/>
            <person name="Paulsen I.T."/>
            <person name="Nelson K.E."/>
            <person name="Eisen J.A."/>
            <person name="Heidelberg J.F."/>
            <person name="Alley M.R.K."/>
            <person name="Ohta N."/>
            <person name="Maddock J.R."/>
            <person name="Potocka I."/>
            <person name="Nelson W.C."/>
            <person name="Newton A."/>
            <person name="Stephens C."/>
            <person name="Phadke N.D."/>
            <person name="Ely B."/>
            <person name="DeBoy R.T."/>
            <person name="Dodson R.J."/>
            <person name="Durkin A.S."/>
            <person name="Gwinn M.L."/>
            <person name="Haft D.H."/>
            <person name="Kolonay J.F."/>
            <person name="Smit J."/>
            <person name="Craven M.B."/>
            <person name="Khouri H.M."/>
            <person name="Shetty J."/>
            <person name="Berry K.J."/>
            <person name="Utterback T.R."/>
            <person name="Tran K."/>
            <person name="Wolf A.M."/>
            <person name="Vamathevan J.J."/>
            <person name="Ermolaeva M.D."/>
            <person name="White O."/>
            <person name="Salzberg S.L."/>
            <person name="Venter J.C."/>
            <person name="Shapiro L."/>
            <person name="Fraser C.M."/>
        </authorList>
    </citation>
    <scope>NUCLEOTIDE SEQUENCE [LARGE SCALE GENOMIC DNA]</scope>
    <source>
        <strain>ATCC 19089 / CIP 103742 / CB 15</strain>
    </source>
</reference>
<comment type="function">
    <text evidence="1">May play a role in DNA repair. It seems to be involved in an RecBC-independent recombinational process of DNA repair. It may act with RecF and RecO.</text>
</comment>
<comment type="similarity">
    <text evidence="1">Belongs to the RecR family.</text>
</comment>
<comment type="sequence caution" evidence="2">
    <conflict type="erroneous initiation">
        <sequence resource="EMBL-CDS" id="AAK22256"/>
    </conflict>
</comment>
<accession>Q9ABF8</accession>
<organism>
    <name type="scientific">Caulobacter vibrioides (strain ATCC 19089 / CIP 103742 / CB 15)</name>
    <name type="common">Caulobacter crescentus</name>
    <dbReference type="NCBI Taxonomy" id="190650"/>
    <lineage>
        <taxon>Bacteria</taxon>
        <taxon>Pseudomonadati</taxon>
        <taxon>Pseudomonadota</taxon>
        <taxon>Alphaproteobacteria</taxon>
        <taxon>Caulobacterales</taxon>
        <taxon>Caulobacteraceae</taxon>
        <taxon>Caulobacter</taxon>
    </lineage>
</organism>
<sequence>MAASAGPEIERLIALLSKLPGLGPRSGRRAALALLKKRDTLLAPLATAMAEAQAKVRTCGTCGSLDVTDPCAVCADGSRDGRLLCVVEEVGSVWAMERGGSFKGRYHVLGGLLSALDGIGPEALRIGELVGRVADGSVAEVILALPATVDGQTTAHYIADRLAKTNVPVTMLARGVPVGGDLDWLDDGTIAQALRARRPA</sequence>
<feature type="chain" id="PRO_0000190300" description="Recombination protein RecR">
    <location>
        <begin position="1"/>
        <end position="200"/>
    </location>
</feature>
<feature type="domain" description="Toprim" evidence="1">
    <location>
        <begin position="82"/>
        <end position="177"/>
    </location>
</feature>
<feature type="zinc finger region" description="C4-type" evidence="1">
    <location>
        <begin position="59"/>
        <end position="74"/>
    </location>
</feature>